<comment type="function">
    <text evidence="1">May be involved in the digestion of phagocytosed particles in the lysosome, participation in an inflammatory protease cascade, and trimming of peptides for antigen presentation.</text>
</comment>
<comment type="subcellular location">
    <subcellularLocation>
        <location evidence="3">Secreted</location>
    </subcellularLocation>
</comment>
<comment type="similarity">
    <text evidence="3">Belongs to the peptidase S10 family.</text>
</comment>
<feature type="signal peptide" evidence="2">
    <location>
        <begin position="1"/>
        <end position="23"/>
    </location>
</feature>
<feature type="propeptide" id="PRO_0000331563" evidence="2">
    <location>
        <begin position="24"/>
        <end status="unknown"/>
    </location>
</feature>
<feature type="chain" id="PRO_0000331564" description="Probable serine carboxypeptidase CPVL">
    <location>
        <begin status="unknown"/>
        <end position="500"/>
    </location>
</feature>
<feature type="active site" evidence="1">
    <location>
        <position position="233"/>
    </location>
</feature>
<feature type="active site" evidence="1">
    <location>
        <position position="414"/>
    </location>
</feature>
<feature type="active site" evidence="1">
    <location>
        <position position="474"/>
    </location>
</feature>
<feature type="glycosylation site" description="N-linked (GlcNAc...) asparagine" evidence="2">
    <location>
        <position position="110"/>
    </location>
</feature>
<feature type="glycosylation site" description="N-linked (GlcNAc...) asparagine" evidence="2">
    <location>
        <position position="161"/>
    </location>
</feature>
<feature type="glycosylation site" description="N-linked (GlcNAc...) asparagine" evidence="2">
    <location>
        <position position="333"/>
    </location>
</feature>
<feature type="glycosylation site" description="N-linked (GlcNAc...) asparagine" evidence="2">
    <location>
        <position position="360"/>
    </location>
</feature>
<evidence type="ECO:0000250" key="1"/>
<evidence type="ECO:0000255" key="2"/>
<evidence type="ECO:0000305" key="3"/>
<protein>
    <recommendedName>
        <fullName>Probable serine carboxypeptidase CPVL</fullName>
        <ecNumber>3.4.16.-</ecNumber>
    </recommendedName>
</protein>
<reference key="1">
    <citation type="journal article" date="2002" name="Nature">
        <title>Sequence and analysis of chromosome 2 of Dictyostelium discoideum.</title>
        <authorList>
            <person name="Gloeckner G."/>
            <person name="Eichinger L."/>
            <person name="Szafranski K."/>
            <person name="Pachebat J.A."/>
            <person name="Bankier A.T."/>
            <person name="Dear P.H."/>
            <person name="Lehmann R."/>
            <person name="Baumgart C."/>
            <person name="Parra G."/>
            <person name="Abril J.F."/>
            <person name="Guigo R."/>
            <person name="Kumpf K."/>
            <person name="Tunggal B."/>
            <person name="Cox E.C."/>
            <person name="Quail M.A."/>
            <person name="Platzer M."/>
            <person name="Rosenthal A."/>
            <person name="Noegel A.A."/>
        </authorList>
    </citation>
    <scope>NUCLEOTIDE SEQUENCE [LARGE SCALE GENOMIC DNA]</scope>
    <source>
        <strain>AX4</strain>
    </source>
</reference>
<reference key="2">
    <citation type="journal article" date="2005" name="Nature">
        <title>The genome of the social amoeba Dictyostelium discoideum.</title>
        <authorList>
            <person name="Eichinger L."/>
            <person name="Pachebat J.A."/>
            <person name="Gloeckner G."/>
            <person name="Rajandream M.A."/>
            <person name="Sucgang R."/>
            <person name="Berriman M."/>
            <person name="Song J."/>
            <person name="Olsen R."/>
            <person name="Szafranski K."/>
            <person name="Xu Q."/>
            <person name="Tunggal B."/>
            <person name="Kummerfeld S."/>
            <person name="Madera M."/>
            <person name="Konfortov B.A."/>
            <person name="Rivero F."/>
            <person name="Bankier A.T."/>
            <person name="Lehmann R."/>
            <person name="Hamlin N."/>
            <person name="Davies R."/>
            <person name="Gaudet P."/>
            <person name="Fey P."/>
            <person name="Pilcher K."/>
            <person name="Chen G."/>
            <person name="Saunders D."/>
            <person name="Sodergren E.J."/>
            <person name="Davis P."/>
            <person name="Kerhornou A."/>
            <person name="Nie X."/>
            <person name="Hall N."/>
            <person name="Anjard C."/>
            <person name="Hemphill L."/>
            <person name="Bason N."/>
            <person name="Farbrother P."/>
            <person name="Desany B."/>
            <person name="Just E."/>
            <person name="Morio T."/>
            <person name="Rost R."/>
            <person name="Churcher C.M."/>
            <person name="Cooper J."/>
            <person name="Haydock S."/>
            <person name="van Driessche N."/>
            <person name="Cronin A."/>
            <person name="Goodhead I."/>
            <person name="Muzny D.M."/>
            <person name="Mourier T."/>
            <person name="Pain A."/>
            <person name="Lu M."/>
            <person name="Harper D."/>
            <person name="Lindsay R."/>
            <person name="Hauser H."/>
            <person name="James K.D."/>
            <person name="Quiles M."/>
            <person name="Madan Babu M."/>
            <person name="Saito T."/>
            <person name="Buchrieser C."/>
            <person name="Wardroper A."/>
            <person name="Felder M."/>
            <person name="Thangavelu M."/>
            <person name="Johnson D."/>
            <person name="Knights A."/>
            <person name="Loulseged H."/>
            <person name="Mungall K.L."/>
            <person name="Oliver K."/>
            <person name="Price C."/>
            <person name="Quail M.A."/>
            <person name="Urushihara H."/>
            <person name="Hernandez J."/>
            <person name="Rabbinowitsch E."/>
            <person name="Steffen D."/>
            <person name="Sanders M."/>
            <person name="Ma J."/>
            <person name="Kohara Y."/>
            <person name="Sharp S."/>
            <person name="Simmonds M.N."/>
            <person name="Spiegler S."/>
            <person name="Tivey A."/>
            <person name="Sugano S."/>
            <person name="White B."/>
            <person name="Walker D."/>
            <person name="Woodward J.R."/>
            <person name="Winckler T."/>
            <person name="Tanaka Y."/>
            <person name="Shaulsky G."/>
            <person name="Schleicher M."/>
            <person name="Weinstock G.M."/>
            <person name="Rosenthal A."/>
            <person name="Cox E.C."/>
            <person name="Chisholm R.L."/>
            <person name="Gibbs R.A."/>
            <person name="Loomis W.F."/>
            <person name="Platzer M."/>
            <person name="Kay R.R."/>
            <person name="Williams J.G."/>
            <person name="Dear P.H."/>
            <person name="Noegel A.A."/>
            <person name="Barrell B.G."/>
            <person name="Kuspa A."/>
        </authorList>
    </citation>
    <scope>NUCLEOTIDE SEQUENCE [LARGE SCALE GENOMIC DNA]</scope>
    <source>
        <strain>AX4</strain>
    </source>
</reference>
<keyword id="KW-0121">Carboxypeptidase</keyword>
<keyword id="KW-0325">Glycoprotein</keyword>
<keyword id="KW-0378">Hydrolase</keyword>
<keyword id="KW-0645">Protease</keyword>
<keyword id="KW-1185">Reference proteome</keyword>
<keyword id="KW-0964">Secreted</keyword>
<keyword id="KW-0732">Signal</keyword>
<keyword id="KW-0865">Zymogen</keyword>
<accession>Q869Q8</accession>
<accession>Q555H4</accession>
<sequence length="500" mass="57061">MKVSLSFLLTILIVIITIKVNLSQEIKISPFFANNLKFEPIPDYIEYDSDSDAGEALFLSNYLDDHKTAKQKSCVDIGAPFQSCDKLLEIDSNLRDTEDFFTFTGFITVNETYNSNTFFWFLESQNGDKNSPLVIFLQGGPGGASTFSLFVETGPYELLDNFTLVQREITWNSEFAMLYIDNPVGTGFSFTDSQEGYSNNEDEIATNLYTFLQQFYKLYPEYYTNELYITGESYAGKYIPAFSYHIIQQNQNSNNPNINLKGIAIGDGLCDPITQVTQYANLAFYTGLADLQQQEVMFEYQDKIVEAINQEQWSVANDLFTDLINGPPDYFQNITGESDYYDIRKTVEPTYGGDFTAFLNQSSIRAMIHVGNNYFQNNNDVYIHLEQDIPKSVKQLFPTILDNIKVILYNGQFDFIVGPSLTETMIRTIEWEGIQPFLESPKIIWKIPSDNVDVAGFVRQWNSFTQVVVRQAGHMVPLDQPARAFDMIDRFINNEPFPSG</sequence>
<dbReference type="EC" id="3.4.16.-"/>
<dbReference type="EMBL" id="AAFI02000012">
    <property type="protein sequence ID" value="EAL70148.1"/>
    <property type="molecule type" value="Genomic_DNA"/>
</dbReference>
<dbReference type="RefSeq" id="XP_644095.1">
    <property type="nucleotide sequence ID" value="XM_639003.1"/>
</dbReference>
<dbReference type="SMR" id="Q869Q8"/>
<dbReference type="FunCoup" id="Q869Q8">
    <property type="interactions" value="1"/>
</dbReference>
<dbReference type="ESTHER" id="dicdi-Q869Q8">
    <property type="family name" value="Carboxypeptidase_S10"/>
</dbReference>
<dbReference type="MEROPS" id="S10.003"/>
<dbReference type="GlyCosmos" id="Q869Q8">
    <property type="glycosylation" value="4 sites, No reported glycans"/>
</dbReference>
<dbReference type="GlyGen" id="Q869Q8">
    <property type="glycosylation" value="4 sites"/>
</dbReference>
<dbReference type="PaxDb" id="44689-DDB0266715"/>
<dbReference type="EnsemblProtists" id="EAL70148">
    <property type="protein sequence ID" value="EAL70148"/>
    <property type="gene ID" value="DDB_G0274511"/>
</dbReference>
<dbReference type="GeneID" id="8619524"/>
<dbReference type="KEGG" id="ddi:DDB_G0274511"/>
<dbReference type="dictyBase" id="DDB_G0274511"/>
<dbReference type="VEuPathDB" id="AmoebaDB:DDB_G0274511"/>
<dbReference type="eggNOG" id="KOG1282">
    <property type="taxonomic scope" value="Eukaryota"/>
</dbReference>
<dbReference type="HOGENOM" id="CLU_008523_10_1_1"/>
<dbReference type="InParanoid" id="Q869Q8"/>
<dbReference type="OMA" id="WYYNYLQ"/>
<dbReference type="PhylomeDB" id="Q869Q8"/>
<dbReference type="PRO" id="PR:Q869Q8"/>
<dbReference type="Proteomes" id="UP000002195">
    <property type="component" value="Chromosome 2"/>
</dbReference>
<dbReference type="GO" id="GO:0005576">
    <property type="term" value="C:extracellular region"/>
    <property type="evidence" value="ECO:0007669"/>
    <property type="project" value="UniProtKB-SubCell"/>
</dbReference>
<dbReference type="GO" id="GO:0004185">
    <property type="term" value="F:serine-type carboxypeptidase activity"/>
    <property type="evidence" value="ECO:0000318"/>
    <property type="project" value="GO_Central"/>
</dbReference>
<dbReference type="GO" id="GO:0006508">
    <property type="term" value="P:proteolysis"/>
    <property type="evidence" value="ECO:0007669"/>
    <property type="project" value="UniProtKB-KW"/>
</dbReference>
<dbReference type="FunFam" id="3.40.50.1820:FF:000096">
    <property type="entry name" value="Carboxypeptidase vitellogenic-like"/>
    <property type="match status" value="1"/>
</dbReference>
<dbReference type="Gene3D" id="3.40.50.1820">
    <property type="entry name" value="alpha/beta hydrolase"/>
    <property type="match status" value="1"/>
</dbReference>
<dbReference type="InterPro" id="IPR029058">
    <property type="entry name" value="AB_hydrolase_fold"/>
</dbReference>
<dbReference type="InterPro" id="IPR001563">
    <property type="entry name" value="Peptidase_S10"/>
</dbReference>
<dbReference type="InterPro" id="IPR033124">
    <property type="entry name" value="Ser_caboxypep_his_AS"/>
</dbReference>
<dbReference type="InterPro" id="IPR018202">
    <property type="entry name" value="Ser_caboxypep_ser_AS"/>
</dbReference>
<dbReference type="PANTHER" id="PTHR11802:SF472">
    <property type="entry name" value="SERINE CARBOXYPEPTIDASE CPVL-RELATED"/>
    <property type="match status" value="1"/>
</dbReference>
<dbReference type="PANTHER" id="PTHR11802">
    <property type="entry name" value="SERINE PROTEASE FAMILY S10 SERINE CARBOXYPEPTIDASE"/>
    <property type="match status" value="1"/>
</dbReference>
<dbReference type="Pfam" id="PF00450">
    <property type="entry name" value="Peptidase_S10"/>
    <property type="match status" value="1"/>
</dbReference>
<dbReference type="PRINTS" id="PR00724">
    <property type="entry name" value="CRBOXYPTASEC"/>
</dbReference>
<dbReference type="SUPFAM" id="SSF53474">
    <property type="entry name" value="alpha/beta-Hydrolases"/>
    <property type="match status" value="1"/>
</dbReference>
<dbReference type="PROSITE" id="PS00560">
    <property type="entry name" value="CARBOXYPEPT_SER_HIS"/>
    <property type="match status" value="1"/>
</dbReference>
<dbReference type="PROSITE" id="PS00131">
    <property type="entry name" value="CARBOXYPEPT_SER_SER"/>
    <property type="match status" value="1"/>
</dbReference>
<organism>
    <name type="scientific">Dictyostelium discoideum</name>
    <name type="common">Social amoeba</name>
    <dbReference type="NCBI Taxonomy" id="44689"/>
    <lineage>
        <taxon>Eukaryota</taxon>
        <taxon>Amoebozoa</taxon>
        <taxon>Evosea</taxon>
        <taxon>Eumycetozoa</taxon>
        <taxon>Dictyostelia</taxon>
        <taxon>Dictyosteliales</taxon>
        <taxon>Dictyosteliaceae</taxon>
        <taxon>Dictyostelium</taxon>
    </lineage>
</organism>
<proteinExistence type="inferred from homology"/>
<gene>
    <name type="primary">cpvl</name>
    <name type="ORF">DDB_G0274511</name>
</gene>
<name>CPVL_DICDI</name>